<protein>
    <recommendedName>
        <fullName evidence="1">Large ribosomal subunit protein bL20</fullName>
    </recommendedName>
    <alternativeName>
        <fullName evidence="2">50S ribosomal protein L20</fullName>
    </alternativeName>
</protein>
<keyword id="KW-1185">Reference proteome</keyword>
<keyword id="KW-0687">Ribonucleoprotein</keyword>
<keyword id="KW-0689">Ribosomal protein</keyword>
<keyword id="KW-0694">RNA-binding</keyword>
<keyword id="KW-0699">rRNA-binding</keyword>
<name>RL20_BRADU</name>
<evidence type="ECO:0000255" key="1">
    <source>
        <dbReference type="HAMAP-Rule" id="MF_00382"/>
    </source>
</evidence>
<evidence type="ECO:0000305" key="2"/>
<feature type="chain" id="PRO_0000177129" description="Large ribosomal subunit protein bL20">
    <location>
        <begin position="1"/>
        <end position="119"/>
    </location>
</feature>
<reference key="1">
    <citation type="journal article" date="2002" name="DNA Res.">
        <title>Complete genomic sequence of nitrogen-fixing symbiotic bacterium Bradyrhizobium japonicum USDA110.</title>
        <authorList>
            <person name="Kaneko T."/>
            <person name="Nakamura Y."/>
            <person name="Sato S."/>
            <person name="Minamisawa K."/>
            <person name="Uchiumi T."/>
            <person name="Sasamoto S."/>
            <person name="Watanabe A."/>
            <person name="Idesawa K."/>
            <person name="Iriguchi M."/>
            <person name="Kawashima K."/>
            <person name="Kohara M."/>
            <person name="Matsumoto M."/>
            <person name="Shimpo S."/>
            <person name="Tsuruoka H."/>
            <person name="Wada T."/>
            <person name="Yamada M."/>
            <person name="Tabata S."/>
        </authorList>
    </citation>
    <scope>NUCLEOTIDE SEQUENCE [LARGE SCALE GENOMIC DNA]</scope>
    <source>
        <strain>JCM 10833 / BCRC 13528 / IAM 13628 / NBRC 14792 / USDA 110</strain>
    </source>
</reference>
<gene>
    <name evidence="1" type="primary">rplT</name>
    <name type="ordered locus">bll0707</name>
</gene>
<proteinExistence type="inferred from homology"/>
<dbReference type="EMBL" id="BA000040">
    <property type="protein sequence ID" value="BAC45972.1"/>
    <property type="molecule type" value="Genomic_DNA"/>
</dbReference>
<dbReference type="RefSeq" id="NP_767347.1">
    <property type="nucleotide sequence ID" value="NC_004463.1"/>
</dbReference>
<dbReference type="RefSeq" id="WP_011083533.1">
    <property type="nucleotide sequence ID" value="NZ_CP011360.1"/>
</dbReference>
<dbReference type="SMR" id="Q89WI0"/>
<dbReference type="FunCoup" id="Q89WI0">
    <property type="interactions" value="735"/>
</dbReference>
<dbReference type="STRING" id="224911.AAV28_00375"/>
<dbReference type="EnsemblBacteria" id="BAC45972">
    <property type="protein sequence ID" value="BAC45972"/>
    <property type="gene ID" value="BAC45972"/>
</dbReference>
<dbReference type="GeneID" id="46487981"/>
<dbReference type="KEGG" id="bja:bll0707"/>
<dbReference type="PATRIC" id="fig|224911.44.peg.79"/>
<dbReference type="eggNOG" id="COG0292">
    <property type="taxonomic scope" value="Bacteria"/>
</dbReference>
<dbReference type="HOGENOM" id="CLU_123265_0_1_5"/>
<dbReference type="InParanoid" id="Q89WI0"/>
<dbReference type="OrthoDB" id="9808966at2"/>
<dbReference type="PhylomeDB" id="Q89WI0"/>
<dbReference type="Proteomes" id="UP000002526">
    <property type="component" value="Chromosome"/>
</dbReference>
<dbReference type="GO" id="GO:1990904">
    <property type="term" value="C:ribonucleoprotein complex"/>
    <property type="evidence" value="ECO:0007669"/>
    <property type="project" value="UniProtKB-KW"/>
</dbReference>
<dbReference type="GO" id="GO:0005840">
    <property type="term" value="C:ribosome"/>
    <property type="evidence" value="ECO:0007669"/>
    <property type="project" value="UniProtKB-KW"/>
</dbReference>
<dbReference type="GO" id="GO:0019843">
    <property type="term" value="F:rRNA binding"/>
    <property type="evidence" value="ECO:0007669"/>
    <property type="project" value="UniProtKB-UniRule"/>
</dbReference>
<dbReference type="GO" id="GO:0003735">
    <property type="term" value="F:structural constituent of ribosome"/>
    <property type="evidence" value="ECO:0000318"/>
    <property type="project" value="GO_Central"/>
</dbReference>
<dbReference type="GO" id="GO:0000027">
    <property type="term" value="P:ribosomal large subunit assembly"/>
    <property type="evidence" value="ECO:0007669"/>
    <property type="project" value="UniProtKB-UniRule"/>
</dbReference>
<dbReference type="GO" id="GO:0006412">
    <property type="term" value="P:translation"/>
    <property type="evidence" value="ECO:0007669"/>
    <property type="project" value="InterPro"/>
</dbReference>
<dbReference type="CDD" id="cd07026">
    <property type="entry name" value="Ribosomal_L20"/>
    <property type="match status" value="1"/>
</dbReference>
<dbReference type="FunFam" id="1.10.1900.20:FF:000001">
    <property type="entry name" value="50S ribosomal protein L20"/>
    <property type="match status" value="1"/>
</dbReference>
<dbReference type="Gene3D" id="6.10.160.10">
    <property type="match status" value="1"/>
</dbReference>
<dbReference type="Gene3D" id="1.10.1900.20">
    <property type="entry name" value="Ribosomal protein L20"/>
    <property type="match status" value="1"/>
</dbReference>
<dbReference type="HAMAP" id="MF_00382">
    <property type="entry name" value="Ribosomal_bL20"/>
    <property type="match status" value="1"/>
</dbReference>
<dbReference type="InterPro" id="IPR005813">
    <property type="entry name" value="Ribosomal_bL20"/>
</dbReference>
<dbReference type="InterPro" id="IPR049946">
    <property type="entry name" value="RIBOSOMAL_L20_CS"/>
</dbReference>
<dbReference type="InterPro" id="IPR035566">
    <property type="entry name" value="Ribosomal_protein_bL20_C"/>
</dbReference>
<dbReference type="NCBIfam" id="TIGR01032">
    <property type="entry name" value="rplT_bact"/>
    <property type="match status" value="1"/>
</dbReference>
<dbReference type="PANTHER" id="PTHR10986">
    <property type="entry name" value="39S RIBOSOMAL PROTEIN L20"/>
    <property type="match status" value="1"/>
</dbReference>
<dbReference type="Pfam" id="PF00453">
    <property type="entry name" value="Ribosomal_L20"/>
    <property type="match status" value="1"/>
</dbReference>
<dbReference type="PRINTS" id="PR00062">
    <property type="entry name" value="RIBOSOMALL20"/>
</dbReference>
<dbReference type="SUPFAM" id="SSF74731">
    <property type="entry name" value="Ribosomal protein L20"/>
    <property type="match status" value="1"/>
</dbReference>
<dbReference type="PROSITE" id="PS00937">
    <property type="entry name" value="RIBOSOMAL_L20"/>
    <property type="match status" value="1"/>
</dbReference>
<sequence length="119" mass="13389">MSRVKRGVTAHAKHKKVYKAAKGFYGRRKNTIRAAKPAVEKAQQYAFRDRKRKKRTFRALWIQRLNAAVRPFGLTYSRFIDGLAKSGITVDRKVLSDLAINEPASFQAIAEKAKAALAA</sequence>
<organism>
    <name type="scientific">Bradyrhizobium diazoefficiens (strain JCM 10833 / BCRC 13528 / IAM 13628 / NBRC 14792 / USDA 110)</name>
    <dbReference type="NCBI Taxonomy" id="224911"/>
    <lineage>
        <taxon>Bacteria</taxon>
        <taxon>Pseudomonadati</taxon>
        <taxon>Pseudomonadota</taxon>
        <taxon>Alphaproteobacteria</taxon>
        <taxon>Hyphomicrobiales</taxon>
        <taxon>Nitrobacteraceae</taxon>
        <taxon>Bradyrhizobium</taxon>
    </lineage>
</organism>
<comment type="function">
    <text evidence="1">Binds directly to 23S ribosomal RNA and is necessary for the in vitro assembly process of the 50S ribosomal subunit. It is not involved in the protein synthesizing functions of that subunit.</text>
</comment>
<comment type="similarity">
    <text evidence="1">Belongs to the bacterial ribosomal protein bL20 family.</text>
</comment>
<accession>Q89WI0</accession>